<accession>Q9UFV1</accession>
<dbReference type="EMBL" id="AL117394">
    <property type="protein sequence ID" value="CAB55896.1"/>
    <property type="molecule type" value="mRNA"/>
</dbReference>
<dbReference type="EMBL" id="CH471159">
    <property type="protein sequence ID" value="EAW51238.1"/>
    <property type="molecule type" value="Genomic_DNA"/>
</dbReference>
<dbReference type="EMBL" id="BC096718">
    <property type="protein sequence ID" value="AAH96718.1"/>
    <property type="molecule type" value="mRNA"/>
</dbReference>
<dbReference type="PIR" id="T17206">
    <property type="entry name" value="T17206"/>
</dbReference>
<dbReference type="RefSeq" id="NP_056409.1">
    <property type="nucleotide sequence ID" value="NM_015594.2"/>
</dbReference>
<dbReference type="iPTMnet" id="Q9UFV1"/>
<dbReference type="PhosphoSitePlus" id="Q9UFV1"/>
<dbReference type="BioMuta" id="TBC1D29"/>
<dbReference type="MassIVE" id="Q9UFV1"/>
<dbReference type="PaxDb" id="9606-ENSP00000462799"/>
<dbReference type="UCSC" id="uc002hfh.4">
    <property type="organism name" value="human"/>
</dbReference>
<dbReference type="AGR" id="HGNC:24509"/>
<dbReference type="GeneCards" id="TBC1D29P"/>
<dbReference type="HGNC" id="HGNC:24509">
    <property type="gene designation" value="TBC1D29P"/>
</dbReference>
<dbReference type="neXtProt" id="NX_Q9UFV1"/>
<dbReference type="eggNOG" id="KOG1102">
    <property type="taxonomic scope" value="Eukaryota"/>
</dbReference>
<dbReference type="HOGENOM" id="CLU_1932405_0_0_1"/>
<dbReference type="InParanoid" id="Q9UFV1"/>
<dbReference type="PAN-GO" id="Q9UFV1">
    <property type="GO annotations" value="0 GO annotations based on evolutionary models"/>
</dbReference>
<dbReference type="PhylomeDB" id="Q9UFV1"/>
<dbReference type="PathwayCommons" id="Q9UFV1"/>
<dbReference type="BioGRID-ORCS" id="26083">
    <property type="hits" value="41 hits in 1098 CRISPR screens"/>
</dbReference>
<dbReference type="ChiTaRS" id="TBC1D29">
    <property type="organism name" value="human"/>
</dbReference>
<dbReference type="GenomeRNAi" id="26083"/>
<dbReference type="Pharos" id="Q9UFV1">
    <property type="development level" value="Tdark"/>
</dbReference>
<dbReference type="PRO" id="PR:Q9UFV1"/>
<dbReference type="Proteomes" id="UP000005640">
    <property type="component" value="Unplaced"/>
</dbReference>
<dbReference type="RNAct" id="Q9UFV1">
    <property type="molecule type" value="protein"/>
</dbReference>
<dbReference type="InterPro" id="IPR000195">
    <property type="entry name" value="Rab-GAP-TBC_dom"/>
</dbReference>
<dbReference type="InterPro" id="IPR035969">
    <property type="entry name" value="Rab-GAP_TBC_sf"/>
</dbReference>
<dbReference type="SUPFAM" id="SSF47923">
    <property type="entry name" value="Ypt/Rab-GAP domain of gyp1p"/>
    <property type="match status" value="1"/>
</dbReference>
<dbReference type="PROSITE" id="PS50086">
    <property type="entry name" value="TBC_RABGAP"/>
    <property type="match status" value="1"/>
</dbReference>
<organism>
    <name type="scientific">Homo sapiens</name>
    <name type="common">Human</name>
    <dbReference type="NCBI Taxonomy" id="9606"/>
    <lineage>
        <taxon>Eukaryota</taxon>
        <taxon>Metazoa</taxon>
        <taxon>Chordata</taxon>
        <taxon>Craniata</taxon>
        <taxon>Vertebrata</taxon>
        <taxon>Euteleostomi</taxon>
        <taxon>Mammalia</taxon>
        <taxon>Eutheria</taxon>
        <taxon>Euarchontoglires</taxon>
        <taxon>Primates</taxon>
        <taxon>Haplorrhini</taxon>
        <taxon>Catarrhini</taxon>
        <taxon>Hominidae</taxon>
        <taxon>Homo</taxon>
    </lineage>
</organism>
<protein>
    <recommendedName>
        <fullName evidence="3">Putative TBC1 domain family member 29</fullName>
    </recommendedName>
</protein>
<feature type="chain" id="PRO_0000325752" description="Putative TBC1 domain family member 29">
    <location>
        <begin position="1"/>
        <end position="150"/>
    </location>
</feature>
<feature type="domain" description="Rab-GAP TBC; truncated" evidence="1">
    <location>
        <begin position="1"/>
        <end position="43"/>
    </location>
</feature>
<feature type="region of interest" description="Disordered" evidence="2">
    <location>
        <begin position="102"/>
        <end position="125"/>
    </location>
</feature>
<feature type="compositionally biased region" description="Polar residues" evidence="2">
    <location>
        <begin position="102"/>
        <end position="111"/>
    </location>
</feature>
<gene>
    <name evidence="4" type="primary">TBC1D29P</name>
    <name type="synonym">TBC1D29</name>
</gene>
<proteinExistence type="uncertain"/>
<sequence length="150" mass="16280">MGHLDKEGLCTQGSSFSWLLRVLNDGISLGLTPCLWDMYLLEGEQMLMLITSIAFKVQRSLYEETNKETWGPATPRALKGTGRARPICESLHSSLQALTASESSRGPSLLQTPPRVPGQQALSRGDKGISVSLSLPSLPSRRGRCGRIIG</sequence>
<keyword id="KW-1185">Reference proteome</keyword>
<reference key="1">
    <citation type="journal article" date="2007" name="BMC Genomics">
        <title>The full-ORF clone resource of the German cDNA consortium.</title>
        <authorList>
            <person name="Bechtel S."/>
            <person name="Rosenfelder H."/>
            <person name="Duda A."/>
            <person name="Schmidt C.P."/>
            <person name="Ernst U."/>
            <person name="Wellenreuther R."/>
            <person name="Mehrle A."/>
            <person name="Schuster C."/>
            <person name="Bahr A."/>
            <person name="Bloecker H."/>
            <person name="Heubner D."/>
            <person name="Hoerlein A."/>
            <person name="Michel G."/>
            <person name="Wedler H."/>
            <person name="Koehrer K."/>
            <person name="Ottenwaelder B."/>
            <person name="Poustka A."/>
            <person name="Wiemann S."/>
            <person name="Schupp I."/>
        </authorList>
    </citation>
    <scope>NUCLEOTIDE SEQUENCE [LARGE SCALE MRNA]</scope>
    <source>
        <tissue>Testis</tissue>
    </source>
</reference>
<reference key="2">
    <citation type="submission" date="2005-07" db="EMBL/GenBank/DDBJ databases">
        <authorList>
            <person name="Mural R.J."/>
            <person name="Istrail S."/>
            <person name="Sutton G.G."/>
            <person name="Florea L."/>
            <person name="Halpern A.L."/>
            <person name="Mobarry C.M."/>
            <person name="Lippert R."/>
            <person name="Walenz B."/>
            <person name="Shatkay H."/>
            <person name="Dew I."/>
            <person name="Miller J.R."/>
            <person name="Flanigan M.J."/>
            <person name="Edwards N.J."/>
            <person name="Bolanos R."/>
            <person name="Fasulo D."/>
            <person name="Halldorsson B.V."/>
            <person name="Hannenhalli S."/>
            <person name="Turner R."/>
            <person name="Yooseph S."/>
            <person name="Lu F."/>
            <person name="Nusskern D.R."/>
            <person name="Shue B.C."/>
            <person name="Zheng X.H."/>
            <person name="Zhong F."/>
            <person name="Delcher A.L."/>
            <person name="Huson D.H."/>
            <person name="Kravitz S.A."/>
            <person name="Mouchard L."/>
            <person name="Reinert K."/>
            <person name="Remington K.A."/>
            <person name="Clark A.G."/>
            <person name="Waterman M.S."/>
            <person name="Eichler E.E."/>
            <person name="Adams M.D."/>
            <person name="Hunkapiller M.W."/>
            <person name="Myers E.W."/>
            <person name="Venter J.C."/>
        </authorList>
    </citation>
    <scope>NUCLEOTIDE SEQUENCE [LARGE SCALE GENOMIC DNA]</scope>
</reference>
<reference key="3">
    <citation type="journal article" date="2004" name="Genome Res.">
        <title>The status, quality, and expansion of the NIH full-length cDNA project: the Mammalian Gene Collection (MGC).</title>
        <authorList>
            <consortium name="The MGC Project Team"/>
        </authorList>
    </citation>
    <scope>NUCLEOTIDE SEQUENCE [LARGE SCALE MRNA]</scope>
</reference>
<name>TBC29_HUMAN</name>
<comment type="caution">
    <text evidence="3">Could be the product of a pseudogene.</text>
</comment>
<evidence type="ECO:0000255" key="1">
    <source>
        <dbReference type="PROSITE-ProRule" id="PRU00163"/>
    </source>
</evidence>
<evidence type="ECO:0000256" key="2">
    <source>
        <dbReference type="SAM" id="MobiDB-lite"/>
    </source>
</evidence>
<evidence type="ECO:0000305" key="3"/>
<evidence type="ECO:0000312" key="4">
    <source>
        <dbReference type="HGNC" id="HGNC:24509"/>
    </source>
</evidence>